<comment type="function">
    <text>Smooth muscle-contracting peptide.</text>
</comment>
<comment type="subcellular location">
    <subcellularLocation>
        <location>Secreted</location>
    </subcellularLocation>
</comment>
<comment type="similarity">
    <text evidence="2">Belongs to the neurotensin family.</text>
</comment>
<evidence type="ECO:0000269" key="1">
    <source>
    </source>
</evidence>
<evidence type="ECO:0000305" key="2"/>
<protein>
    <recommendedName>
        <fullName>Neurotensin</fullName>
        <shortName>NT</shortName>
    </recommendedName>
</protein>
<accession>P13724</accession>
<keyword id="KW-0903">Direct protein sequencing</keyword>
<keyword id="KW-0873">Pyrrolidone carboxylic acid</keyword>
<keyword id="KW-1185">Reference proteome</keyword>
<keyword id="KW-0964">Secreted</keyword>
<keyword id="KW-0838">Vasoactive</keyword>
<name>NEUT_CHICK</name>
<reference key="1">
    <citation type="journal article" date="1987" name="Jpn. J. Pharmacol.">
        <title>The amino acid sequence of a smooth muscle-contracting peptide from chicken rectum. Identity to chicken neurotensin.</title>
        <authorList>
            <person name="Iwabuchi H."/>
            <person name="Komori S."/>
            <person name="Ohashi H."/>
            <person name="Kimura S."/>
        </authorList>
    </citation>
    <scope>PROTEIN SEQUENCE</scope>
    <scope>PYROGLUTAMATE FORMATION AT GLN-1</scope>
</reference>
<dbReference type="PIR" id="A28505">
    <property type="entry name" value="A28505"/>
</dbReference>
<dbReference type="FunCoup" id="P13724">
    <property type="interactions" value="1"/>
</dbReference>
<dbReference type="InParanoid" id="P13724"/>
<dbReference type="OrthoDB" id="9929102at2759"/>
<dbReference type="Proteomes" id="UP000000539">
    <property type="component" value="Unassembled WGS sequence"/>
</dbReference>
<dbReference type="GO" id="GO:0005576">
    <property type="term" value="C:extracellular region"/>
    <property type="evidence" value="ECO:0007669"/>
    <property type="project" value="UniProtKB-SubCell"/>
</dbReference>
<dbReference type="GO" id="GO:0097746">
    <property type="term" value="P:blood vessel diameter maintenance"/>
    <property type="evidence" value="ECO:0007669"/>
    <property type="project" value="UniProtKB-KW"/>
</dbReference>
<organism>
    <name type="scientific">Gallus gallus</name>
    <name type="common">Chicken</name>
    <dbReference type="NCBI Taxonomy" id="9031"/>
    <lineage>
        <taxon>Eukaryota</taxon>
        <taxon>Metazoa</taxon>
        <taxon>Chordata</taxon>
        <taxon>Craniata</taxon>
        <taxon>Vertebrata</taxon>
        <taxon>Euteleostomi</taxon>
        <taxon>Archelosauria</taxon>
        <taxon>Archosauria</taxon>
        <taxon>Dinosauria</taxon>
        <taxon>Saurischia</taxon>
        <taxon>Theropoda</taxon>
        <taxon>Coelurosauria</taxon>
        <taxon>Aves</taxon>
        <taxon>Neognathae</taxon>
        <taxon>Galloanserae</taxon>
        <taxon>Galliformes</taxon>
        <taxon>Phasianidae</taxon>
        <taxon>Phasianinae</taxon>
        <taxon>Gallus</taxon>
    </lineage>
</organism>
<proteinExistence type="evidence at protein level"/>
<feature type="peptide" id="PRO_0000044069" description="Neurotensin">
    <location>
        <begin position="1"/>
        <end position="13"/>
    </location>
</feature>
<feature type="modified residue" description="Pyrrolidone carboxylic acid" evidence="1">
    <location>
        <position position="1"/>
    </location>
</feature>
<gene>
    <name type="primary">NTS</name>
</gene>
<sequence>QLHVNKARRPYIL</sequence>